<gene>
    <name evidence="1" type="primary">rlmN</name>
    <name type="ordered locus">NMB1308</name>
</gene>
<name>RLMN_NEIMB</name>
<comment type="function">
    <text evidence="1">Specifically methylates position 2 of adenine 2503 in 23S rRNA and position 2 of adenine 37 in tRNAs. m2A2503 modification seems to play a crucial role in the proofreading step occurring at the peptidyl transferase center and thus would serve to optimize ribosomal fidelity.</text>
</comment>
<comment type="catalytic activity">
    <reaction evidence="1">
        <text>adenosine(2503) in 23S rRNA + 2 reduced [2Fe-2S]-[ferredoxin] + 2 S-adenosyl-L-methionine = 2-methyladenosine(2503) in 23S rRNA + 5'-deoxyadenosine + L-methionine + 2 oxidized [2Fe-2S]-[ferredoxin] + S-adenosyl-L-homocysteine</text>
        <dbReference type="Rhea" id="RHEA:42916"/>
        <dbReference type="Rhea" id="RHEA-COMP:10000"/>
        <dbReference type="Rhea" id="RHEA-COMP:10001"/>
        <dbReference type="Rhea" id="RHEA-COMP:10152"/>
        <dbReference type="Rhea" id="RHEA-COMP:10282"/>
        <dbReference type="ChEBI" id="CHEBI:17319"/>
        <dbReference type="ChEBI" id="CHEBI:33737"/>
        <dbReference type="ChEBI" id="CHEBI:33738"/>
        <dbReference type="ChEBI" id="CHEBI:57844"/>
        <dbReference type="ChEBI" id="CHEBI:57856"/>
        <dbReference type="ChEBI" id="CHEBI:59789"/>
        <dbReference type="ChEBI" id="CHEBI:74411"/>
        <dbReference type="ChEBI" id="CHEBI:74497"/>
        <dbReference type="EC" id="2.1.1.192"/>
    </reaction>
</comment>
<comment type="catalytic activity">
    <reaction evidence="1">
        <text>adenosine(37) in tRNA + 2 reduced [2Fe-2S]-[ferredoxin] + 2 S-adenosyl-L-methionine = 2-methyladenosine(37) in tRNA + 5'-deoxyadenosine + L-methionine + 2 oxidized [2Fe-2S]-[ferredoxin] + S-adenosyl-L-homocysteine</text>
        <dbReference type="Rhea" id="RHEA:43332"/>
        <dbReference type="Rhea" id="RHEA-COMP:10000"/>
        <dbReference type="Rhea" id="RHEA-COMP:10001"/>
        <dbReference type="Rhea" id="RHEA-COMP:10162"/>
        <dbReference type="Rhea" id="RHEA-COMP:10485"/>
        <dbReference type="ChEBI" id="CHEBI:17319"/>
        <dbReference type="ChEBI" id="CHEBI:33737"/>
        <dbReference type="ChEBI" id="CHEBI:33738"/>
        <dbReference type="ChEBI" id="CHEBI:57844"/>
        <dbReference type="ChEBI" id="CHEBI:57856"/>
        <dbReference type="ChEBI" id="CHEBI:59789"/>
        <dbReference type="ChEBI" id="CHEBI:74411"/>
        <dbReference type="ChEBI" id="CHEBI:74497"/>
        <dbReference type="EC" id="2.1.1.192"/>
    </reaction>
</comment>
<comment type="cofactor">
    <cofactor evidence="1">
        <name>[4Fe-4S] cluster</name>
        <dbReference type="ChEBI" id="CHEBI:49883"/>
    </cofactor>
    <text evidence="1">Binds 1 [4Fe-4S] cluster. The cluster is coordinated with 3 cysteines and an exchangeable S-adenosyl-L-methionine.</text>
</comment>
<comment type="subcellular location">
    <subcellularLocation>
        <location evidence="1">Cytoplasm</location>
    </subcellularLocation>
</comment>
<comment type="miscellaneous">
    <text evidence="1">Reaction proceeds by a ping-pong mechanism involving intermediate methylation of a conserved cysteine residue.</text>
</comment>
<comment type="similarity">
    <text evidence="1">Belongs to the radical SAM superfamily. RlmN family.</text>
</comment>
<organism>
    <name type="scientific">Neisseria meningitidis serogroup B (strain ATCC BAA-335 / MC58)</name>
    <dbReference type="NCBI Taxonomy" id="122586"/>
    <lineage>
        <taxon>Bacteria</taxon>
        <taxon>Pseudomonadati</taxon>
        <taxon>Pseudomonadota</taxon>
        <taxon>Betaproteobacteria</taxon>
        <taxon>Neisseriales</taxon>
        <taxon>Neisseriaceae</taxon>
        <taxon>Neisseria</taxon>
    </lineage>
</organism>
<dbReference type="EC" id="2.1.1.192" evidence="1"/>
<dbReference type="EMBL" id="AE002098">
    <property type="protein sequence ID" value="AAF41683.1"/>
    <property type="molecule type" value="Genomic_DNA"/>
</dbReference>
<dbReference type="PIR" id="B81098">
    <property type="entry name" value="B81098"/>
</dbReference>
<dbReference type="RefSeq" id="NP_274327.1">
    <property type="nucleotide sequence ID" value="NC_003112.2"/>
</dbReference>
<dbReference type="RefSeq" id="WP_002219171.1">
    <property type="nucleotide sequence ID" value="NC_003112.2"/>
</dbReference>
<dbReference type="SMR" id="Q9JZ42"/>
<dbReference type="FunCoup" id="Q9JZ42">
    <property type="interactions" value="522"/>
</dbReference>
<dbReference type="STRING" id="122586.NMB1308"/>
<dbReference type="PaxDb" id="122586-NMB1308"/>
<dbReference type="KEGG" id="nme:NMB1308"/>
<dbReference type="PATRIC" id="fig|122586.8.peg.1642"/>
<dbReference type="HOGENOM" id="CLU_029101_2_0_4"/>
<dbReference type="InParanoid" id="Q9JZ42"/>
<dbReference type="OrthoDB" id="9793973at2"/>
<dbReference type="Proteomes" id="UP000000425">
    <property type="component" value="Chromosome"/>
</dbReference>
<dbReference type="GO" id="GO:0005737">
    <property type="term" value="C:cytoplasm"/>
    <property type="evidence" value="ECO:0007669"/>
    <property type="project" value="UniProtKB-SubCell"/>
</dbReference>
<dbReference type="GO" id="GO:0051539">
    <property type="term" value="F:4 iron, 4 sulfur cluster binding"/>
    <property type="evidence" value="ECO:0007669"/>
    <property type="project" value="UniProtKB-UniRule"/>
</dbReference>
<dbReference type="GO" id="GO:0046872">
    <property type="term" value="F:metal ion binding"/>
    <property type="evidence" value="ECO:0007669"/>
    <property type="project" value="UniProtKB-KW"/>
</dbReference>
<dbReference type="GO" id="GO:0070040">
    <property type="term" value="F:rRNA (adenine(2503)-C2-)-methyltransferase activity"/>
    <property type="evidence" value="ECO:0007669"/>
    <property type="project" value="UniProtKB-UniRule"/>
</dbReference>
<dbReference type="GO" id="GO:0019843">
    <property type="term" value="F:rRNA binding"/>
    <property type="evidence" value="ECO:0007669"/>
    <property type="project" value="UniProtKB-UniRule"/>
</dbReference>
<dbReference type="GO" id="GO:0002935">
    <property type="term" value="F:tRNA (adenine(37)-C2)-methyltransferase activity"/>
    <property type="evidence" value="ECO:0007669"/>
    <property type="project" value="UniProtKB-UniRule"/>
</dbReference>
<dbReference type="GO" id="GO:0000049">
    <property type="term" value="F:tRNA binding"/>
    <property type="evidence" value="ECO:0007669"/>
    <property type="project" value="UniProtKB-UniRule"/>
</dbReference>
<dbReference type="GO" id="GO:0070475">
    <property type="term" value="P:rRNA base methylation"/>
    <property type="evidence" value="ECO:0000318"/>
    <property type="project" value="GO_Central"/>
</dbReference>
<dbReference type="GO" id="GO:0030488">
    <property type="term" value="P:tRNA methylation"/>
    <property type="evidence" value="ECO:0000318"/>
    <property type="project" value="GO_Central"/>
</dbReference>
<dbReference type="CDD" id="cd01335">
    <property type="entry name" value="Radical_SAM"/>
    <property type="match status" value="1"/>
</dbReference>
<dbReference type="FunFam" id="1.10.150.530:FF:000003">
    <property type="entry name" value="Dual-specificity RNA methyltransferase RlmN"/>
    <property type="match status" value="1"/>
</dbReference>
<dbReference type="FunFam" id="3.20.20.70:FF:000008">
    <property type="entry name" value="Dual-specificity RNA methyltransferase RlmN"/>
    <property type="match status" value="1"/>
</dbReference>
<dbReference type="Gene3D" id="1.10.150.530">
    <property type="match status" value="1"/>
</dbReference>
<dbReference type="Gene3D" id="3.20.20.70">
    <property type="entry name" value="Aldolase class I"/>
    <property type="match status" value="1"/>
</dbReference>
<dbReference type="HAMAP" id="MF_01849">
    <property type="entry name" value="RNA_methyltr_RlmN"/>
    <property type="match status" value="1"/>
</dbReference>
<dbReference type="InterPro" id="IPR013785">
    <property type="entry name" value="Aldolase_TIM"/>
</dbReference>
<dbReference type="InterPro" id="IPR040072">
    <property type="entry name" value="Methyltransferase_A"/>
</dbReference>
<dbReference type="InterPro" id="IPR048641">
    <property type="entry name" value="RlmN_N"/>
</dbReference>
<dbReference type="InterPro" id="IPR027492">
    <property type="entry name" value="RNA_MTrfase_RlmN"/>
</dbReference>
<dbReference type="InterPro" id="IPR004383">
    <property type="entry name" value="rRNA_lsu_MTrfase_RlmN/Cfr"/>
</dbReference>
<dbReference type="InterPro" id="IPR007197">
    <property type="entry name" value="rSAM"/>
</dbReference>
<dbReference type="NCBIfam" id="TIGR00048">
    <property type="entry name" value="rRNA_mod_RlmN"/>
    <property type="match status" value="1"/>
</dbReference>
<dbReference type="PANTHER" id="PTHR30544">
    <property type="entry name" value="23S RRNA METHYLTRANSFERASE"/>
    <property type="match status" value="1"/>
</dbReference>
<dbReference type="PANTHER" id="PTHR30544:SF5">
    <property type="entry name" value="RADICAL SAM CORE DOMAIN-CONTAINING PROTEIN"/>
    <property type="match status" value="1"/>
</dbReference>
<dbReference type="Pfam" id="PF04055">
    <property type="entry name" value="Radical_SAM"/>
    <property type="match status" value="1"/>
</dbReference>
<dbReference type="Pfam" id="PF21016">
    <property type="entry name" value="RlmN_N"/>
    <property type="match status" value="1"/>
</dbReference>
<dbReference type="PIRSF" id="PIRSF006004">
    <property type="entry name" value="CHP00048"/>
    <property type="match status" value="1"/>
</dbReference>
<dbReference type="SFLD" id="SFLDF00275">
    <property type="entry name" value="adenosine_C2_methyltransferase"/>
    <property type="match status" value="1"/>
</dbReference>
<dbReference type="SFLD" id="SFLDS00029">
    <property type="entry name" value="Radical_SAM"/>
    <property type="match status" value="1"/>
</dbReference>
<dbReference type="SUPFAM" id="SSF102114">
    <property type="entry name" value="Radical SAM enzymes"/>
    <property type="match status" value="1"/>
</dbReference>
<dbReference type="PROSITE" id="PS51918">
    <property type="entry name" value="RADICAL_SAM"/>
    <property type="match status" value="1"/>
</dbReference>
<sequence>MKTNLLNYDLQGLTRHFADMGEKPFRAKQVMRWMHQSGAQNFDEMTDLAKSLRHKLNEQAGIEIPKLMMSQKSSDGTRKWLLDVGTGNGVETVFIPESDRGTLCISSQVGCALECTFCSTGRQGFNRNLTAAEIIGQLWWANKAMGVTPKNERVISNVVMMGMGEPMANFDNVVTALSIMLDDHGYGLSRRRVTVSTSGMVPQMDRLRDVMPVALAVSLHASNDEVRNQIVPLNKKYPLKELMAACQRYLVKAPRDFITFEYVMLDGINDKAQHARELIELVTDVPCKFNLIPFNPFPNSGYERSSNENIRVFRDILQQAGFVVTVRKTRGDDIDAACGQLAGQVQDKTRRQQKWQQILIGQQG</sequence>
<reference key="1">
    <citation type="journal article" date="2000" name="Science">
        <title>Complete genome sequence of Neisseria meningitidis serogroup B strain MC58.</title>
        <authorList>
            <person name="Tettelin H."/>
            <person name="Saunders N.J."/>
            <person name="Heidelberg J.F."/>
            <person name="Jeffries A.C."/>
            <person name="Nelson K.E."/>
            <person name="Eisen J.A."/>
            <person name="Ketchum K.A."/>
            <person name="Hood D.W."/>
            <person name="Peden J.F."/>
            <person name="Dodson R.J."/>
            <person name="Nelson W.C."/>
            <person name="Gwinn M.L."/>
            <person name="DeBoy R.T."/>
            <person name="Peterson J.D."/>
            <person name="Hickey E.K."/>
            <person name="Haft D.H."/>
            <person name="Salzberg S.L."/>
            <person name="White O."/>
            <person name="Fleischmann R.D."/>
            <person name="Dougherty B.A."/>
            <person name="Mason T.M."/>
            <person name="Ciecko A."/>
            <person name="Parksey D.S."/>
            <person name="Blair E."/>
            <person name="Cittone H."/>
            <person name="Clark E.B."/>
            <person name="Cotton M.D."/>
            <person name="Utterback T.R."/>
            <person name="Khouri H.M."/>
            <person name="Qin H."/>
            <person name="Vamathevan J.J."/>
            <person name="Gill J."/>
            <person name="Scarlato V."/>
            <person name="Masignani V."/>
            <person name="Pizza M."/>
            <person name="Grandi G."/>
            <person name="Sun L."/>
            <person name="Smith H.O."/>
            <person name="Fraser C.M."/>
            <person name="Moxon E.R."/>
            <person name="Rappuoli R."/>
            <person name="Venter J.C."/>
        </authorList>
    </citation>
    <scope>NUCLEOTIDE SEQUENCE [LARGE SCALE GENOMIC DNA]</scope>
    <source>
        <strain>ATCC BAA-335 / MC58</strain>
    </source>
</reference>
<protein>
    <recommendedName>
        <fullName evidence="1">Dual-specificity RNA methyltransferase RlmN</fullName>
        <ecNumber evidence="1">2.1.1.192</ecNumber>
    </recommendedName>
    <alternativeName>
        <fullName evidence="1">23S rRNA (adenine(2503)-C(2))-methyltransferase</fullName>
    </alternativeName>
    <alternativeName>
        <fullName evidence="1">23S rRNA m2A2503 methyltransferase</fullName>
    </alternativeName>
    <alternativeName>
        <fullName evidence="1">Ribosomal RNA large subunit methyltransferase N</fullName>
    </alternativeName>
    <alternativeName>
        <fullName evidence="1">tRNA (adenine(37)-C(2))-methyltransferase</fullName>
    </alternativeName>
    <alternativeName>
        <fullName evidence="1">tRNA m2A37 methyltransferase</fullName>
    </alternativeName>
</protein>
<keyword id="KW-0004">4Fe-4S</keyword>
<keyword id="KW-0963">Cytoplasm</keyword>
<keyword id="KW-1015">Disulfide bond</keyword>
<keyword id="KW-0408">Iron</keyword>
<keyword id="KW-0411">Iron-sulfur</keyword>
<keyword id="KW-0479">Metal-binding</keyword>
<keyword id="KW-0489">Methyltransferase</keyword>
<keyword id="KW-1185">Reference proteome</keyword>
<keyword id="KW-0698">rRNA processing</keyword>
<keyword id="KW-0949">S-adenosyl-L-methionine</keyword>
<keyword id="KW-0808">Transferase</keyword>
<keyword id="KW-0819">tRNA processing</keyword>
<feature type="chain" id="PRO_0000350278" description="Dual-specificity RNA methyltransferase RlmN">
    <location>
        <begin position="1"/>
        <end position="364"/>
    </location>
</feature>
<feature type="domain" description="Radical SAM core" evidence="2">
    <location>
        <begin position="97"/>
        <end position="333"/>
    </location>
</feature>
<feature type="active site" description="Proton acceptor" evidence="1">
    <location>
        <position position="91"/>
    </location>
</feature>
<feature type="active site" description="S-methylcysteine intermediate" evidence="1">
    <location>
        <position position="338"/>
    </location>
</feature>
<feature type="binding site" evidence="1">
    <location>
        <position position="111"/>
    </location>
    <ligand>
        <name>[4Fe-4S] cluster</name>
        <dbReference type="ChEBI" id="CHEBI:49883"/>
        <note>4Fe-4S-S-AdoMet</note>
    </ligand>
</feature>
<feature type="binding site" evidence="1">
    <location>
        <position position="115"/>
    </location>
    <ligand>
        <name>[4Fe-4S] cluster</name>
        <dbReference type="ChEBI" id="CHEBI:49883"/>
        <note>4Fe-4S-S-AdoMet</note>
    </ligand>
</feature>
<feature type="binding site" evidence="1">
    <location>
        <position position="118"/>
    </location>
    <ligand>
        <name>[4Fe-4S] cluster</name>
        <dbReference type="ChEBI" id="CHEBI:49883"/>
        <note>4Fe-4S-S-AdoMet</note>
    </ligand>
</feature>
<feature type="binding site" evidence="1">
    <location>
        <begin position="164"/>
        <end position="165"/>
    </location>
    <ligand>
        <name>S-adenosyl-L-methionine</name>
        <dbReference type="ChEBI" id="CHEBI:59789"/>
    </ligand>
</feature>
<feature type="binding site" evidence="1">
    <location>
        <position position="196"/>
    </location>
    <ligand>
        <name>S-adenosyl-L-methionine</name>
        <dbReference type="ChEBI" id="CHEBI:59789"/>
    </ligand>
</feature>
<feature type="binding site" evidence="1">
    <location>
        <begin position="218"/>
        <end position="220"/>
    </location>
    <ligand>
        <name>S-adenosyl-L-methionine</name>
        <dbReference type="ChEBI" id="CHEBI:59789"/>
    </ligand>
</feature>
<feature type="binding site" evidence="1">
    <location>
        <position position="295"/>
    </location>
    <ligand>
        <name>S-adenosyl-L-methionine</name>
        <dbReference type="ChEBI" id="CHEBI:59789"/>
    </ligand>
</feature>
<feature type="disulfide bond" description="(transient)" evidence="1">
    <location>
        <begin position="104"/>
        <end position="338"/>
    </location>
</feature>
<evidence type="ECO:0000255" key="1">
    <source>
        <dbReference type="HAMAP-Rule" id="MF_01849"/>
    </source>
</evidence>
<evidence type="ECO:0000255" key="2">
    <source>
        <dbReference type="PROSITE-ProRule" id="PRU01266"/>
    </source>
</evidence>
<accession>Q9JZ42</accession>
<proteinExistence type="inferred from homology"/>